<gene>
    <name evidence="1" type="primary">gcvP</name>
    <name type="ordered locus">Sde_2476</name>
</gene>
<comment type="function">
    <text evidence="1">The glycine cleavage system catalyzes the degradation of glycine. The P protein binds the alpha-amino group of glycine through its pyridoxal phosphate cofactor; CO(2) is released and the remaining methylamine moiety is then transferred to the lipoamide cofactor of the H protein.</text>
</comment>
<comment type="catalytic activity">
    <reaction evidence="1">
        <text>N(6)-[(R)-lipoyl]-L-lysyl-[glycine-cleavage complex H protein] + glycine + H(+) = N(6)-[(R)-S(8)-aminomethyldihydrolipoyl]-L-lysyl-[glycine-cleavage complex H protein] + CO2</text>
        <dbReference type="Rhea" id="RHEA:24304"/>
        <dbReference type="Rhea" id="RHEA-COMP:10494"/>
        <dbReference type="Rhea" id="RHEA-COMP:10495"/>
        <dbReference type="ChEBI" id="CHEBI:15378"/>
        <dbReference type="ChEBI" id="CHEBI:16526"/>
        <dbReference type="ChEBI" id="CHEBI:57305"/>
        <dbReference type="ChEBI" id="CHEBI:83099"/>
        <dbReference type="ChEBI" id="CHEBI:83143"/>
        <dbReference type="EC" id="1.4.4.2"/>
    </reaction>
</comment>
<comment type="cofactor">
    <cofactor evidence="1">
        <name>pyridoxal 5'-phosphate</name>
        <dbReference type="ChEBI" id="CHEBI:597326"/>
    </cofactor>
</comment>
<comment type="subunit">
    <text evidence="1">The glycine cleavage system is composed of four proteins: P, T, L and H.</text>
</comment>
<comment type="similarity">
    <text evidence="1">Belongs to the GcvP family.</text>
</comment>
<evidence type="ECO:0000255" key="1">
    <source>
        <dbReference type="HAMAP-Rule" id="MF_00711"/>
    </source>
</evidence>
<reference key="1">
    <citation type="journal article" date="2008" name="PLoS Genet.">
        <title>Complete genome sequence of the complex carbohydrate-degrading marine bacterium, Saccharophagus degradans strain 2-40 T.</title>
        <authorList>
            <person name="Weiner R.M."/>
            <person name="Taylor L.E. II"/>
            <person name="Henrissat B."/>
            <person name="Hauser L."/>
            <person name="Land M."/>
            <person name="Coutinho P.M."/>
            <person name="Rancurel C."/>
            <person name="Saunders E.H."/>
            <person name="Longmire A.G."/>
            <person name="Zhang H."/>
            <person name="Bayer E.A."/>
            <person name="Gilbert H.J."/>
            <person name="Larimer F."/>
            <person name="Zhulin I.B."/>
            <person name="Ekborg N.A."/>
            <person name="Lamed R."/>
            <person name="Richardson P.M."/>
            <person name="Borovok I."/>
            <person name="Hutcheson S."/>
        </authorList>
    </citation>
    <scope>NUCLEOTIDE SEQUENCE [LARGE SCALE GENOMIC DNA]</scope>
    <source>
        <strain>2-40 / ATCC 43961 / DSM 17024</strain>
    </source>
</reference>
<dbReference type="EC" id="1.4.4.2" evidence="1"/>
<dbReference type="EMBL" id="CP000282">
    <property type="protein sequence ID" value="ABD81736.1"/>
    <property type="molecule type" value="Genomic_DNA"/>
</dbReference>
<dbReference type="RefSeq" id="WP_011468953.1">
    <property type="nucleotide sequence ID" value="NC_007912.1"/>
</dbReference>
<dbReference type="SMR" id="Q21HU3"/>
<dbReference type="STRING" id="203122.Sde_2476"/>
<dbReference type="GeneID" id="98614136"/>
<dbReference type="KEGG" id="sde:Sde_2476"/>
<dbReference type="eggNOG" id="COG0403">
    <property type="taxonomic scope" value="Bacteria"/>
</dbReference>
<dbReference type="eggNOG" id="COG1003">
    <property type="taxonomic scope" value="Bacteria"/>
</dbReference>
<dbReference type="HOGENOM" id="CLU_004620_1_1_6"/>
<dbReference type="OrthoDB" id="9801272at2"/>
<dbReference type="Proteomes" id="UP000001947">
    <property type="component" value="Chromosome"/>
</dbReference>
<dbReference type="GO" id="GO:0005829">
    <property type="term" value="C:cytosol"/>
    <property type="evidence" value="ECO:0007669"/>
    <property type="project" value="TreeGrafter"/>
</dbReference>
<dbReference type="GO" id="GO:0005960">
    <property type="term" value="C:glycine cleavage complex"/>
    <property type="evidence" value="ECO:0007669"/>
    <property type="project" value="TreeGrafter"/>
</dbReference>
<dbReference type="GO" id="GO:0016594">
    <property type="term" value="F:glycine binding"/>
    <property type="evidence" value="ECO:0007669"/>
    <property type="project" value="TreeGrafter"/>
</dbReference>
<dbReference type="GO" id="GO:0004375">
    <property type="term" value="F:glycine dehydrogenase (decarboxylating) activity"/>
    <property type="evidence" value="ECO:0007669"/>
    <property type="project" value="UniProtKB-EC"/>
</dbReference>
<dbReference type="GO" id="GO:0030170">
    <property type="term" value="F:pyridoxal phosphate binding"/>
    <property type="evidence" value="ECO:0007669"/>
    <property type="project" value="TreeGrafter"/>
</dbReference>
<dbReference type="GO" id="GO:0019464">
    <property type="term" value="P:glycine decarboxylation via glycine cleavage system"/>
    <property type="evidence" value="ECO:0007669"/>
    <property type="project" value="UniProtKB-UniRule"/>
</dbReference>
<dbReference type="CDD" id="cd00613">
    <property type="entry name" value="GDC-P"/>
    <property type="match status" value="2"/>
</dbReference>
<dbReference type="FunFam" id="3.40.640.10:FF:000005">
    <property type="entry name" value="Glycine dehydrogenase (decarboxylating), mitochondrial"/>
    <property type="match status" value="1"/>
</dbReference>
<dbReference type="FunFam" id="3.90.1150.10:FF:000007">
    <property type="entry name" value="Glycine dehydrogenase (decarboxylating), mitochondrial"/>
    <property type="match status" value="1"/>
</dbReference>
<dbReference type="FunFam" id="3.40.640.10:FF:000007">
    <property type="entry name" value="glycine dehydrogenase (Decarboxylating), mitochondrial"/>
    <property type="match status" value="1"/>
</dbReference>
<dbReference type="Gene3D" id="3.90.1150.10">
    <property type="entry name" value="Aspartate Aminotransferase, domain 1"/>
    <property type="match status" value="2"/>
</dbReference>
<dbReference type="Gene3D" id="3.40.640.10">
    <property type="entry name" value="Type I PLP-dependent aspartate aminotransferase-like (Major domain)"/>
    <property type="match status" value="2"/>
</dbReference>
<dbReference type="HAMAP" id="MF_00711">
    <property type="entry name" value="GcvP"/>
    <property type="match status" value="1"/>
</dbReference>
<dbReference type="InterPro" id="IPR003437">
    <property type="entry name" value="GcvP"/>
</dbReference>
<dbReference type="InterPro" id="IPR049316">
    <property type="entry name" value="GDC-P_C"/>
</dbReference>
<dbReference type="InterPro" id="IPR049315">
    <property type="entry name" value="GDC-P_N"/>
</dbReference>
<dbReference type="InterPro" id="IPR020581">
    <property type="entry name" value="GDC_P"/>
</dbReference>
<dbReference type="InterPro" id="IPR015424">
    <property type="entry name" value="PyrdxlP-dep_Trfase"/>
</dbReference>
<dbReference type="InterPro" id="IPR015421">
    <property type="entry name" value="PyrdxlP-dep_Trfase_major"/>
</dbReference>
<dbReference type="InterPro" id="IPR015422">
    <property type="entry name" value="PyrdxlP-dep_Trfase_small"/>
</dbReference>
<dbReference type="NCBIfam" id="TIGR00461">
    <property type="entry name" value="gcvP"/>
    <property type="match status" value="1"/>
</dbReference>
<dbReference type="NCBIfam" id="NF003346">
    <property type="entry name" value="PRK04366.1"/>
    <property type="match status" value="1"/>
</dbReference>
<dbReference type="PANTHER" id="PTHR11773:SF13">
    <property type="entry name" value="GLYCINE DEHYDROGENASE (DECARBOXYLATING)"/>
    <property type="match status" value="1"/>
</dbReference>
<dbReference type="PANTHER" id="PTHR11773">
    <property type="entry name" value="GLYCINE DEHYDROGENASE, DECARBOXYLATING"/>
    <property type="match status" value="1"/>
</dbReference>
<dbReference type="Pfam" id="PF21478">
    <property type="entry name" value="GcvP2_C"/>
    <property type="match status" value="1"/>
</dbReference>
<dbReference type="Pfam" id="PF02347">
    <property type="entry name" value="GDC-P"/>
    <property type="match status" value="2"/>
</dbReference>
<dbReference type="SUPFAM" id="SSF53383">
    <property type="entry name" value="PLP-dependent transferases"/>
    <property type="match status" value="2"/>
</dbReference>
<sequence>MSHGTSLDELFNSRDFIGRHIGPNADQTRAMLDAMGLDSIDQLIDLTVPASIRGEETRALAAPVNEQQALAELKNIAGNNQRFKSYIGMGYHPTYVPPVILRNVLENPGWYTAYTPYQPEIAQGRLEGLLNFQQMIIELTGMDMANASMLDEATAAAEAMAMAKRVARKNKSNTFFADKHCHPQTLAVLQTRASHFGFELVIGDITQDLNKQEVFGAITQYPGTSGEVKDLRPIVNQAHEQDALLIVAADILSLVLLESPGAMGADIVVGSNQRFGIPMGFGGPHAAFFGFREKYKRATPGRIIGVSVDTRGKRALRMAMQTREQHIRREKANSNICTSQVLLAVMSVFYAMYHGSAGVTRIAQRVHTLTKMLAQGLTAQGHKLAFDNYFDTLCVIVNDQQQGLFDRAQQAGVNLRKLDKNALTISLNECTSLEDIHQLLDIFSLGKHSQDVKSLETKALAAEVIPASCRREGPALNHPVFEQYHSETEMLRYLKRLESKDIALNHAMIPLGSCTMKLNATAEMIPVTWPEFGELHPFAPMEQAAGYSTLFTQLQDMLKACTGYDAISLQPNAGSQGEYAGLVAIRKYFEHLGQTERNICLIPASAHGTNPASAQMVEMKVVVVACDNLGNVDLNDLKAKVAQYGETIAALMVTYPSTHGVFEEEITAICDLIHSVGAQVYIDGANMNALVGLAAPGKFGGDVSHLNLHKTFCIPHGGGGPGMGPIGVKSHLAPFLAGHPVQPVPNTLVENGTISAAPWGSASILTISWMYIRMMGAEGMKRATEFAILNANYIAHRLQDHYPILYKGKNGYIAHECLLDLRPLKESSGITEEDIAKRLMDFGFHAPTMSFPVAGTLMIEPTESESQAELDRFCDAMIKIRQEASLVESGELPRDNNPLVNAPHTLDDALDETWTRPYTRDEATRPLPYLHAHKIWPTVNRIDNVYGDRNLICSCPSIESYTEE</sequence>
<name>GCSP_SACD2</name>
<organism>
    <name type="scientific">Saccharophagus degradans (strain 2-40 / ATCC 43961 / DSM 17024)</name>
    <dbReference type="NCBI Taxonomy" id="203122"/>
    <lineage>
        <taxon>Bacteria</taxon>
        <taxon>Pseudomonadati</taxon>
        <taxon>Pseudomonadota</taxon>
        <taxon>Gammaproteobacteria</taxon>
        <taxon>Cellvibrionales</taxon>
        <taxon>Cellvibrionaceae</taxon>
        <taxon>Saccharophagus</taxon>
    </lineage>
</organism>
<feature type="chain" id="PRO_1000045605" description="Glycine dehydrogenase (decarboxylating)">
    <location>
        <begin position="1"/>
        <end position="964"/>
    </location>
</feature>
<feature type="modified residue" description="N6-(pyridoxal phosphate)lysine" evidence="1">
    <location>
        <position position="710"/>
    </location>
</feature>
<protein>
    <recommendedName>
        <fullName evidence="1">Glycine dehydrogenase (decarboxylating)</fullName>
        <ecNumber evidence="1">1.4.4.2</ecNumber>
    </recommendedName>
    <alternativeName>
        <fullName evidence="1">Glycine cleavage system P-protein</fullName>
    </alternativeName>
    <alternativeName>
        <fullName evidence="1">Glycine decarboxylase</fullName>
    </alternativeName>
    <alternativeName>
        <fullName evidence="1">Glycine dehydrogenase (aminomethyl-transferring)</fullName>
    </alternativeName>
</protein>
<accession>Q21HU3</accession>
<keyword id="KW-0560">Oxidoreductase</keyword>
<keyword id="KW-0663">Pyridoxal phosphate</keyword>
<keyword id="KW-1185">Reference proteome</keyword>
<proteinExistence type="inferred from homology"/>